<proteinExistence type="inferred from homology"/>
<dbReference type="EC" id="3.4.25.1" evidence="7"/>
<dbReference type="EMBL" id="BN001302">
    <property type="protein sequence ID" value="CBF76042.1"/>
    <property type="molecule type" value="Genomic_DNA"/>
</dbReference>
<dbReference type="RefSeq" id="XP_661097.1">
    <property type="nucleotide sequence ID" value="XM_656005.1"/>
</dbReference>
<dbReference type="SMR" id="Q5B7I7"/>
<dbReference type="STRING" id="227321.Q5B7I7"/>
<dbReference type="MEROPS" id="T01.986"/>
<dbReference type="EnsemblFungi" id="CBF76042">
    <property type="protein sequence ID" value="CBF76042"/>
    <property type="gene ID" value="ANIA_03493"/>
</dbReference>
<dbReference type="GeneID" id="2872915"/>
<dbReference type="KEGG" id="ani:ANIA_03493"/>
<dbReference type="VEuPathDB" id="FungiDB:AN3493"/>
<dbReference type="eggNOG" id="KOG0179">
    <property type="taxonomic scope" value="Eukaryota"/>
</dbReference>
<dbReference type="HOGENOM" id="CLU_035750_1_0_1"/>
<dbReference type="InParanoid" id="Q5B7I7"/>
<dbReference type="OMA" id="QYQRRHL"/>
<dbReference type="OrthoDB" id="268479at2759"/>
<dbReference type="Proteomes" id="UP000000560">
    <property type="component" value="Chromosome II"/>
</dbReference>
<dbReference type="GO" id="GO:0005829">
    <property type="term" value="C:cytosol"/>
    <property type="evidence" value="ECO:0000318"/>
    <property type="project" value="GO_Central"/>
</dbReference>
<dbReference type="GO" id="GO:0005634">
    <property type="term" value="C:nucleus"/>
    <property type="evidence" value="ECO:0000318"/>
    <property type="project" value="GO_Central"/>
</dbReference>
<dbReference type="GO" id="GO:0019774">
    <property type="term" value="C:proteasome core complex, beta-subunit complex"/>
    <property type="evidence" value="ECO:0000318"/>
    <property type="project" value="GO_Central"/>
</dbReference>
<dbReference type="GO" id="GO:0004298">
    <property type="term" value="F:threonine-type endopeptidase activity"/>
    <property type="evidence" value="ECO:0007669"/>
    <property type="project" value="UniProtKB-KW"/>
</dbReference>
<dbReference type="GO" id="GO:0043161">
    <property type="term" value="P:proteasome-mediated ubiquitin-dependent protein catabolic process"/>
    <property type="evidence" value="ECO:0000318"/>
    <property type="project" value="GO_Central"/>
</dbReference>
<dbReference type="GO" id="GO:0019748">
    <property type="term" value="P:secondary metabolic process"/>
    <property type="evidence" value="ECO:0000270"/>
    <property type="project" value="AspGD"/>
</dbReference>
<dbReference type="CDD" id="cd03757">
    <property type="entry name" value="proteasome_beta_type_1"/>
    <property type="match status" value="1"/>
</dbReference>
<dbReference type="FunFam" id="3.60.20.10:FF:000027">
    <property type="entry name" value="Proteasome subunit beta type-6"/>
    <property type="match status" value="1"/>
</dbReference>
<dbReference type="Gene3D" id="3.60.20.10">
    <property type="entry name" value="Glutamine Phosphoribosylpyrophosphate, subunit 1, domain 1"/>
    <property type="match status" value="1"/>
</dbReference>
<dbReference type="InterPro" id="IPR029055">
    <property type="entry name" value="Ntn_hydrolases_N"/>
</dbReference>
<dbReference type="InterPro" id="IPR001353">
    <property type="entry name" value="Proteasome_sua/b"/>
</dbReference>
<dbReference type="InterPro" id="IPR023333">
    <property type="entry name" value="Proteasome_suB-type"/>
</dbReference>
<dbReference type="PANTHER" id="PTHR32194">
    <property type="entry name" value="METALLOPROTEASE TLDD"/>
    <property type="match status" value="1"/>
</dbReference>
<dbReference type="PANTHER" id="PTHR32194:SF2">
    <property type="entry name" value="PROTEASOME SUBUNIT BETA TYPE-1"/>
    <property type="match status" value="1"/>
</dbReference>
<dbReference type="Pfam" id="PF00227">
    <property type="entry name" value="Proteasome"/>
    <property type="match status" value="1"/>
</dbReference>
<dbReference type="SUPFAM" id="SSF56235">
    <property type="entry name" value="N-terminal nucleophile aminohydrolases (Ntn hydrolases)"/>
    <property type="match status" value="1"/>
</dbReference>
<dbReference type="PROSITE" id="PS51476">
    <property type="entry name" value="PROTEASOME_BETA_2"/>
    <property type="match status" value="1"/>
</dbReference>
<reference key="1">
    <citation type="journal article" date="2005" name="Nature">
        <title>Sequencing of Aspergillus nidulans and comparative analysis with A. fumigatus and A. oryzae.</title>
        <authorList>
            <person name="Galagan J.E."/>
            <person name="Calvo S.E."/>
            <person name="Cuomo C."/>
            <person name="Ma L.-J."/>
            <person name="Wortman J.R."/>
            <person name="Batzoglou S."/>
            <person name="Lee S.-I."/>
            <person name="Bastuerkmen M."/>
            <person name="Spevak C.C."/>
            <person name="Clutterbuck J."/>
            <person name="Kapitonov V."/>
            <person name="Jurka J."/>
            <person name="Scazzocchio C."/>
            <person name="Farman M.L."/>
            <person name="Butler J."/>
            <person name="Purcell S."/>
            <person name="Harris S."/>
            <person name="Braus G.H."/>
            <person name="Draht O."/>
            <person name="Busch S."/>
            <person name="D'Enfert C."/>
            <person name="Bouchier C."/>
            <person name="Goldman G.H."/>
            <person name="Bell-Pedersen D."/>
            <person name="Griffiths-Jones S."/>
            <person name="Doonan J.H."/>
            <person name="Yu J."/>
            <person name="Vienken K."/>
            <person name="Pain A."/>
            <person name="Freitag M."/>
            <person name="Selker E.U."/>
            <person name="Archer D.B."/>
            <person name="Penalva M.A."/>
            <person name="Oakley B.R."/>
            <person name="Momany M."/>
            <person name="Tanaka T."/>
            <person name="Kumagai T."/>
            <person name="Asai K."/>
            <person name="Machida M."/>
            <person name="Nierman W.C."/>
            <person name="Denning D.W."/>
            <person name="Caddick M.X."/>
            <person name="Hynes M."/>
            <person name="Paoletti M."/>
            <person name="Fischer R."/>
            <person name="Miller B.L."/>
            <person name="Dyer P.S."/>
            <person name="Sachs M.S."/>
            <person name="Osmani S.A."/>
            <person name="Birren B.W."/>
        </authorList>
    </citation>
    <scope>NUCLEOTIDE SEQUENCE [LARGE SCALE GENOMIC DNA]</scope>
    <source>
        <strain>FGSC A4 / ATCC 38163 / CBS 112.46 / NRRL 194 / M139</strain>
    </source>
</reference>
<reference key="2">
    <citation type="journal article" date="2009" name="Fungal Genet. Biol.">
        <title>The 2008 update of the Aspergillus nidulans genome annotation: a community effort.</title>
        <authorList>
            <person name="Wortman J.R."/>
            <person name="Gilsenan J.M."/>
            <person name="Joardar V."/>
            <person name="Deegan J."/>
            <person name="Clutterbuck J."/>
            <person name="Andersen M.R."/>
            <person name="Archer D."/>
            <person name="Bencina M."/>
            <person name="Braus G."/>
            <person name="Coutinho P."/>
            <person name="von Dohren H."/>
            <person name="Doonan J."/>
            <person name="Driessen A.J."/>
            <person name="Durek P."/>
            <person name="Espeso E."/>
            <person name="Fekete E."/>
            <person name="Flipphi M."/>
            <person name="Estrada C.G."/>
            <person name="Geysens S."/>
            <person name="Goldman G."/>
            <person name="de Groot P.W."/>
            <person name="Hansen K."/>
            <person name="Harris S.D."/>
            <person name="Heinekamp T."/>
            <person name="Helmstaedt K."/>
            <person name="Henrissat B."/>
            <person name="Hofmann G."/>
            <person name="Homan T."/>
            <person name="Horio T."/>
            <person name="Horiuchi H."/>
            <person name="James S."/>
            <person name="Jones M."/>
            <person name="Karaffa L."/>
            <person name="Karanyi Z."/>
            <person name="Kato M."/>
            <person name="Keller N."/>
            <person name="Kelly D.E."/>
            <person name="Kiel J.A."/>
            <person name="Kim J.M."/>
            <person name="van der Klei I.J."/>
            <person name="Klis F.M."/>
            <person name="Kovalchuk A."/>
            <person name="Krasevec N."/>
            <person name="Kubicek C.P."/>
            <person name="Liu B."/>
            <person name="Maccabe A."/>
            <person name="Meyer V."/>
            <person name="Mirabito P."/>
            <person name="Miskei M."/>
            <person name="Mos M."/>
            <person name="Mullins J."/>
            <person name="Nelson D.R."/>
            <person name="Nielsen J."/>
            <person name="Oakley B.R."/>
            <person name="Osmani S.A."/>
            <person name="Pakula T."/>
            <person name="Paszewski A."/>
            <person name="Paulsen I."/>
            <person name="Pilsyk S."/>
            <person name="Pocsi I."/>
            <person name="Punt P.J."/>
            <person name="Ram A.F."/>
            <person name="Ren Q."/>
            <person name="Robellet X."/>
            <person name="Robson G."/>
            <person name="Seiboth B."/>
            <person name="van Solingen P."/>
            <person name="Specht T."/>
            <person name="Sun J."/>
            <person name="Taheri-Talesh N."/>
            <person name="Takeshita N."/>
            <person name="Ussery D."/>
            <person name="vanKuyk P.A."/>
            <person name="Visser H."/>
            <person name="van de Vondervoort P.J."/>
            <person name="de Vries R.P."/>
            <person name="Walton J."/>
            <person name="Xiang X."/>
            <person name="Xiong Y."/>
            <person name="Zeng A.P."/>
            <person name="Brandt B.W."/>
            <person name="Cornell M.J."/>
            <person name="van den Hondel C.A."/>
            <person name="Visser J."/>
            <person name="Oliver S.G."/>
            <person name="Turner G."/>
        </authorList>
    </citation>
    <scope>GENOME REANNOTATION</scope>
    <source>
        <strain>FGSC A4 / ATCC 38163 / CBS 112.46 / NRRL 194 / M139</strain>
    </source>
</reference>
<reference key="3">
    <citation type="journal article" date="2010" name="Appl. Environ. Microbiol.">
        <title>Activation of a silent fungal polyketide biosynthesis pathway through regulatory cross talk with a cryptic nonribosomal peptide synthetase gene cluster.</title>
        <authorList>
            <person name="Bergmann S."/>
            <person name="Funk A.N."/>
            <person name="Scherlach K."/>
            <person name="Schroeckh V."/>
            <person name="Shelest E."/>
            <person name="Horn U."/>
            <person name="Hertweck C."/>
            <person name="Brakhage A.A."/>
        </authorList>
    </citation>
    <scope>IDENTIFICATION</scope>
</reference>
<reference key="4">
    <citation type="journal article" date="2016" name="ACS Chem. Biol.">
        <title>Resistance gene-guided genome mining: serial promoter exchanges in Aspergillus nidulans reveal the biosynthetic pathway for fellutamide B, a proteasome inhibitor.</title>
        <authorList>
            <person name="Yeh H.H."/>
            <person name="Ahuja M."/>
            <person name="Chiang Y.M."/>
            <person name="Oakley C.E."/>
            <person name="Moore S."/>
            <person name="Yoon O."/>
            <person name="Hajovsky H."/>
            <person name="Bok J.W."/>
            <person name="Keller N.P."/>
            <person name="Wang C.C."/>
            <person name="Oakley B.R."/>
        </authorList>
    </citation>
    <scope>FUNCTION</scope>
    <scope>DISRUPTION PHENOTYPE</scope>
</reference>
<gene>
    <name type="primary">inpE</name>
    <name type="ORF">ANIA_03493</name>
</gene>
<name>INPE_EMENI</name>
<accession>Q5B7I7</accession>
<accession>C8V548</accession>
<protein>
    <recommendedName>
        <fullName evidence="4">Proteasome subunit beta inpE</fullName>
        <ecNumber evidence="7">3.4.25.1</ecNumber>
    </recommendedName>
    <alternativeName>
        <fullName evidence="4">Fellutamide B biosynthesis cluster protein E</fullName>
    </alternativeName>
    <alternativeName>
        <fullName evidence="3">Inp cluster protein E</fullName>
    </alternativeName>
</protein>
<organism>
    <name type="scientific">Emericella nidulans (strain FGSC A4 / ATCC 38163 / CBS 112.46 / NRRL 194 / M139)</name>
    <name type="common">Aspergillus nidulans</name>
    <dbReference type="NCBI Taxonomy" id="227321"/>
    <lineage>
        <taxon>Eukaryota</taxon>
        <taxon>Fungi</taxon>
        <taxon>Dikarya</taxon>
        <taxon>Ascomycota</taxon>
        <taxon>Pezizomycotina</taxon>
        <taxon>Eurotiomycetes</taxon>
        <taxon>Eurotiomycetidae</taxon>
        <taxon>Eurotiales</taxon>
        <taxon>Aspergillaceae</taxon>
        <taxon>Aspergillus</taxon>
        <taxon>Aspergillus subgen. Nidulantes</taxon>
    </lineage>
</organism>
<evidence type="ECO:0000255" key="1">
    <source>
        <dbReference type="PROSITE-ProRule" id="PRU00809"/>
    </source>
</evidence>
<evidence type="ECO:0000269" key="2">
    <source>
    </source>
</evidence>
<evidence type="ECO:0000303" key="3">
    <source>
    </source>
</evidence>
<evidence type="ECO:0000303" key="4">
    <source>
    </source>
</evidence>
<evidence type="ECO:0000305" key="5"/>
<evidence type="ECO:0000305" key="6">
    <source>
    </source>
</evidence>
<evidence type="ECO:0000305" key="7">
    <source>
    </source>
</evidence>
<feature type="chain" id="PRO_0000444112" description="Proteasome subunit beta inpE">
    <location>
        <begin position="1"/>
        <end position="215"/>
    </location>
</feature>
<keyword id="KW-0963">Cytoplasm</keyword>
<keyword id="KW-0378">Hydrolase</keyword>
<keyword id="KW-0539">Nucleus</keyword>
<keyword id="KW-0645">Protease</keyword>
<keyword id="KW-0647">Proteasome</keyword>
<keyword id="KW-1185">Reference proteome</keyword>
<keyword id="KW-0888">Threonine protease</keyword>
<comment type="function">
    <text evidence="2 6">Proteasome subunit beta type-6; part of the inp gene cluster that mediates the biosynthesis of fellutamide B, a mycotoxin that acts as a proteasome inhibitor (PubMed:20952652, PubMed:27294372). In the first step of fellutabmide B biosynthesis inpC activates 3-hydroxydodecanoic acid to generate 3-hydroxydodecanoyl-AMP that is then loaded onto the T0 domain of inpB (PubMed:27294372). The 3-hydroxydodecanoyl-S-phosphopantetheinyl-T0 is sequentially extended with L-Asn and L-Gln by the two CAT modules of inpB (PubMed:27294372). The linear lipodipeptide from inpB is then transferred onto inpA for the addition of the third amino acid, L-Leu (PubMed:27294372). Reductive releasing of the lipotripeptide by the TE domain of inpA produces (2S)-fellutamide B (PubMed:27294372). InpF might be involved in the release and transfer of the lipodipeptide from inpB to inpA (PubMed:27294372). The inp cluster-encoded proteasome subunit inpE confers resistance to internally produced fellutamides (PubMed:27294372). The MFS efflux transporter inpD may contribute to fellutamide resistance as well (PubMed:27294372).</text>
</comment>
<comment type="catalytic activity">
    <reaction evidence="7">
        <text>Cleavage of peptide bonds with very broad specificity.</text>
        <dbReference type="EC" id="3.4.25.1"/>
    </reaction>
</comment>
<comment type="subcellular location">
    <subcellularLocation>
        <location evidence="1">Cytoplasm</location>
    </subcellularLocation>
    <subcellularLocation>
        <location evidence="5">Nucleus</location>
    </subcellularLocation>
</comment>
<comment type="disruption phenotype">
    <text evidence="2">Strongly inhibits growth in fellutamide B-producing conditions (PubMed:27294372).</text>
</comment>
<comment type="similarity">
    <text evidence="1">Belongs to the peptidase T1B family.</text>
</comment>
<sequence>MAKETRFYPYTSNGGATLGVSGPDFAILAGDTRSTAGYNINTRYEPKVFTIQDARDRSIVISVIGFAADGRALKERLDAIVAMYKYQHGKNIGLRACAQRVSTMLYEKRFFPYQLQTMVAGIDADGQGAIYYYDPAGCIEKRSHCAAGEASSLMLPFLDSQAPRLQPLSLQTAQQLVRDAYTGATERHIEVGDHLQMLVVTREGVSEQLVDLKKD</sequence>